<reference key="1">
    <citation type="journal article" date="2007" name="PLoS Genet.">
        <title>Patterns and implications of gene gain and loss in the evolution of Prochlorococcus.</title>
        <authorList>
            <person name="Kettler G.C."/>
            <person name="Martiny A.C."/>
            <person name="Huang K."/>
            <person name="Zucker J."/>
            <person name="Coleman M.L."/>
            <person name="Rodrigue S."/>
            <person name="Chen F."/>
            <person name="Lapidus A."/>
            <person name="Ferriera S."/>
            <person name="Johnson J."/>
            <person name="Steglich C."/>
            <person name="Church G.M."/>
            <person name="Richardson P."/>
            <person name="Chisholm S.W."/>
        </authorList>
    </citation>
    <scope>NUCLEOTIDE SEQUENCE [LARGE SCALE GENOMIC DNA]</scope>
    <source>
        <strain>MIT 9515</strain>
    </source>
</reference>
<keyword id="KW-0067">ATP-binding</keyword>
<keyword id="KW-0238">DNA-binding</keyword>
<keyword id="KW-0479">Metal-binding</keyword>
<keyword id="KW-0547">Nucleotide-binding</keyword>
<keyword id="KW-0678">Repressor</keyword>
<keyword id="KW-0804">Transcription</keyword>
<keyword id="KW-0805">Transcription regulation</keyword>
<keyword id="KW-0862">Zinc</keyword>
<keyword id="KW-0863">Zinc-finger</keyword>
<dbReference type="EMBL" id="CP000552">
    <property type="protein sequence ID" value="ABM71555.1"/>
    <property type="molecule type" value="Genomic_DNA"/>
</dbReference>
<dbReference type="RefSeq" id="WP_011819663.1">
    <property type="nucleotide sequence ID" value="NC_008817.1"/>
</dbReference>
<dbReference type="SMR" id="A2BUU4"/>
<dbReference type="STRING" id="167542.P9515_03461"/>
<dbReference type="GeneID" id="60200393"/>
<dbReference type="KEGG" id="pmc:P9515_03461"/>
<dbReference type="eggNOG" id="COG1327">
    <property type="taxonomic scope" value="Bacteria"/>
</dbReference>
<dbReference type="HOGENOM" id="CLU_108412_0_0_3"/>
<dbReference type="OrthoDB" id="9807461at2"/>
<dbReference type="Proteomes" id="UP000001589">
    <property type="component" value="Chromosome"/>
</dbReference>
<dbReference type="GO" id="GO:0005524">
    <property type="term" value="F:ATP binding"/>
    <property type="evidence" value="ECO:0007669"/>
    <property type="project" value="UniProtKB-KW"/>
</dbReference>
<dbReference type="GO" id="GO:0003677">
    <property type="term" value="F:DNA binding"/>
    <property type="evidence" value="ECO:0007669"/>
    <property type="project" value="UniProtKB-KW"/>
</dbReference>
<dbReference type="GO" id="GO:0008270">
    <property type="term" value="F:zinc ion binding"/>
    <property type="evidence" value="ECO:0007669"/>
    <property type="project" value="UniProtKB-UniRule"/>
</dbReference>
<dbReference type="GO" id="GO:0045892">
    <property type="term" value="P:negative regulation of DNA-templated transcription"/>
    <property type="evidence" value="ECO:0007669"/>
    <property type="project" value="UniProtKB-UniRule"/>
</dbReference>
<dbReference type="HAMAP" id="MF_00440">
    <property type="entry name" value="NrdR"/>
    <property type="match status" value="1"/>
</dbReference>
<dbReference type="InterPro" id="IPR005144">
    <property type="entry name" value="ATP-cone_dom"/>
</dbReference>
<dbReference type="InterPro" id="IPR055173">
    <property type="entry name" value="NrdR-like_N"/>
</dbReference>
<dbReference type="InterPro" id="IPR003796">
    <property type="entry name" value="RNR_NrdR-like"/>
</dbReference>
<dbReference type="NCBIfam" id="TIGR00244">
    <property type="entry name" value="transcriptional regulator NrdR"/>
    <property type="match status" value="1"/>
</dbReference>
<dbReference type="PANTHER" id="PTHR30455">
    <property type="entry name" value="TRANSCRIPTIONAL REPRESSOR NRDR"/>
    <property type="match status" value="1"/>
</dbReference>
<dbReference type="PANTHER" id="PTHR30455:SF2">
    <property type="entry name" value="TRANSCRIPTIONAL REPRESSOR NRDR"/>
    <property type="match status" value="1"/>
</dbReference>
<dbReference type="Pfam" id="PF03477">
    <property type="entry name" value="ATP-cone"/>
    <property type="match status" value="1"/>
</dbReference>
<dbReference type="Pfam" id="PF22811">
    <property type="entry name" value="Zn_ribbon_NrdR"/>
    <property type="match status" value="1"/>
</dbReference>
<dbReference type="PROSITE" id="PS51161">
    <property type="entry name" value="ATP_CONE"/>
    <property type="match status" value="1"/>
</dbReference>
<organism>
    <name type="scientific">Prochlorococcus marinus (strain MIT 9515)</name>
    <dbReference type="NCBI Taxonomy" id="167542"/>
    <lineage>
        <taxon>Bacteria</taxon>
        <taxon>Bacillati</taxon>
        <taxon>Cyanobacteriota</taxon>
        <taxon>Cyanophyceae</taxon>
        <taxon>Synechococcales</taxon>
        <taxon>Prochlorococcaceae</taxon>
        <taxon>Prochlorococcus</taxon>
    </lineage>
</organism>
<gene>
    <name evidence="1" type="primary">nrdR</name>
    <name type="ordered locus">P9515_03461</name>
</gene>
<name>NRDR_PROM5</name>
<comment type="function">
    <text evidence="1">Negatively regulates transcription of bacterial ribonucleotide reductase nrd genes and operons by binding to NrdR-boxes.</text>
</comment>
<comment type="cofactor">
    <cofactor evidence="1">
        <name>Zn(2+)</name>
        <dbReference type="ChEBI" id="CHEBI:29105"/>
    </cofactor>
    <text evidence="1">Binds 1 zinc ion.</text>
</comment>
<comment type="similarity">
    <text evidence="1">Belongs to the NrdR family.</text>
</comment>
<proteinExistence type="inferred from homology"/>
<accession>A2BUU4</accession>
<evidence type="ECO:0000255" key="1">
    <source>
        <dbReference type="HAMAP-Rule" id="MF_00440"/>
    </source>
</evidence>
<protein>
    <recommendedName>
        <fullName evidence="1">Transcriptional repressor NrdR</fullName>
    </recommendedName>
</protein>
<feature type="chain" id="PRO_1000080799" description="Transcriptional repressor NrdR">
    <location>
        <begin position="1"/>
        <end position="159"/>
    </location>
</feature>
<feature type="domain" description="ATP-cone" evidence="1">
    <location>
        <begin position="49"/>
        <end position="139"/>
    </location>
</feature>
<feature type="zinc finger region" evidence="1">
    <location>
        <begin position="3"/>
        <end position="34"/>
    </location>
</feature>
<sequence length="159" mass="18094">MQCPTCQNTDSRVLESRSADTGKSVRRRRECLNCSFRFTTYERVETMPISVLKKDGSRELFNKDKLVTGISRACEKTTFSREAIIDFVDSIESQIIQDSNKDIKSSQIGELILKGLRKENEVAYIRYASVYRKFNGVKDFVSTLESLKGSSKNELASIL</sequence>